<reference key="1">
    <citation type="journal article" date="1990" name="Mol. Gen. Genet.">
        <title>Sugarbeet mitochondria contain an open reading frame showing extensive sequence homology to the subunit 2 gene of the NADH: ubiquinone reductase complex.</title>
        <authorList>
            <person name="Xue Y."/>
            <person name="Davies D.R."/>
            <person name="Thomas C.M."/>
        </authorList>
    </citation>
    <scope>NUCLEOTIDE SEQUENCE [GENOMIC DNA]</scope>
</reference>
<feature type="chain" id="PRO_0000117558" description="NADH-ubiquinone oxidoreductase chain 2">
    <location>
        <begin position="1"/>
        <end position="515"/>
    </location>
</feature>
<feature type="transmembrane region" description="Helical" evidence="2">
    <location>
        <begin position="63"/>
        <end position="83"/>
    </location>
</feature>
<feature type="transmembrane region" description="Helical" evidence="2">
    <location>
        <begin position="250"/>
        <end position="270"/>
    </location>
</feature>
<feature type="transmembrane region" description="Helical" evidence="2">
    <location>
        <begin position="299"/>
        <end position="319"/>
    </location>
</feature>
<feature type="transmembrane region" description="Helical" evidence="2">
    <location>
        <begin position="356"/>
        <end position="376"/>
    </location>
</feature>
<feature type="transmembrane region" description="Helical" evidence="2">
    <location>
        <begin position="379"/>
        <end position="399"/>
    </location>
</feature>
<protein>
    <recommendedName>
        <fullName>NADH-ubiquinone oxidoreductase chain 2</fullName>
        <ecNumber>7.1.1.2</ecNumber>
    </recommendedName>
    <alternativeName>
        <fullName>NADH dehydrogenase subunit 2</fullName>
    </alternativeName>
</protein>
<sequence>MLSLTIKGKARRRKERAFGDRDFLTFSSKTKKTENVNLSFEKGTRFFDRGGMIFGPSPRSARWPIGIAAFGLCLLFLIKNSGSARESAGNNRKEGVHVAAASAPFLVNRAAGSATTTKERIHFKITNASAMAACGMAGSDLFGYIIQVESGVTGTAGLMENNFHGSVQRALFSLRILRSLRVNSLARIQNFWGPSIPSSSPAKTPLPFGLNIFFDSYMWAPDIYEGSPTPVTAFFSIAPERSISANILRVFIYGSYGATLQQIFFFCSIALRLRSTGAMANEGKASSSIGQLDYGGLYFVLVLMWNREGIQSLLIGLFIYASMDDRCFAIVSALRQTRVKYIADLGALAKTNPISAITFSITMFSYAGIPPLAGFCSKFYLFFAALGCGAYFLAPVGVVTSVIGCWAAGRLPRVSQFGDRRQFSVHRTRSLPNQLRHGWECMLRKIGSSLIHQPSVYSISLYESTITTRDEPWFGEFELALGVIGLPVTAHDRILRCSPPVVGTTRAGPGLNSER</sequence>
<gene>
    <name type="primary">ND2</name>
    <name type="synonym">NAD2</name>
</gene>
<accession>P15688</accession>
<keyword id="KW-0249">Electron transport</keyword>
<keyword id="KW-0472">Membrane</keyword>
<keyword id="KW-0496">Mitochondrion</keyword>
<keyword id="KW-0999">Mitochondrion inner membrane</keyword>
<keyword id="KW-0520">NAD</keyword>
<keyword id="KW-0679">Respiratory chain</keyword>
<keyword id="KW-1278">Translocase</keyword>
<keyword id="KW-0812">Transmembrane</keyword>
<keyword id="KW-1133">Transmembrane helix</keyword>
<keyword id="KW-0813">Transport</keyword>
<keyword id="KW-0830">Ubiquinone</keyword>
<comment type="function">
    <text evidence="1">Core subunit of the mitochondrial membrane respiratory chain NADH dehydrogenase (Complex I) that is believed to belong to the minimal assembly required for catalysis. Complex I functions in the transfer of electrons from NADH to the respiratory chain. The immediate electron acceptor for the enzyme is believed to be ubiquinone (By similarity).</text>
</comment>
<comment type="catalytic activity">
    <reaction>
        <text>a ubiquinone + NADH + 5 H(+)(in) = a ubiquinol + NAD(+) + 4 H(+)(out)</text>
        <dbReference type="Rhea" id="RHEA:29091"/>
        <dbReference type="Rhea" id="RHEA-COMP:9565"/>
        <dbReference type="Rhea" id="RHEA-COMP:9566"/>
        <dbReference type="ChEBI" id="CHEBI:15378"/>
        <dbReference type="ChEBI" id="CHEBI:16389"/>
        <dbReference type="ChEBI" id="CHEBI:17976"/>
        <dbReference type="ChEBI" id="CHEBI:57540"/>
        <dbReference type="ChEBI" id="CHEBI:57945"/>
        <dbReference type="EC" id="7.1.1.2"/>
    </reaction>
</comment>
<comment type="subcellular location">
    <subcellularLocation>
        <location>Mitochondrion inner membrane</location>
        <topology>Multi-pass membrane protein</topology>
    </subcellularLocation>
</comment>
<comment type="similarity">
    <text evidence="3">Belongs to the complex I subunit 2 family.</text>
</comment>
<comment type="caution">
    <text evidence="3">It is uncertain whether Met-1 or Met-52 is the initiator.</text>
</comment>
<comment type="sequence caution" evidence="3">
    <conflict type="erroneous initiation">
        <sequence resource="EMBL-CDS" id="CAA34729"/>
    </conflict>
</comment>
<name>NU2M_BETVU</name>
<geneLocation type="mitochondrion"/>
<evidence type="ECO:0000250" key="1"/>
<evidence type="ECO:0000255" key="2"/>
<evidence type="ECO:0000305" key="3"/>
<dbReference type="EC" id="7.1.1.2"/>
<dbReference type="EMBL" id="X16828">
    <property type="protein sequence ID" value="CAA34728.1"/>
    <property type="molecule type" value="Genomic_DNA"/>
</dbReference>
<dbReference type="EMBL" id="X16828">
    <property type="protein sequence ID" value="CAA34729.1"/>
    <property type="status" value="ALT_INIT"/>
    <property type="molecule type" value="Genomic_DNA"/>
</dbReference>
<dbReference type="PIR" id="S12804">
    <property type="entry name" value="DNETU2"/>
</dbReference>
<dbReference type="SMR" id="P15688"/>
<dbReference type="GO" id="GO:0005743">
    <property type="term" value="C:mitochondrial inner membrane"/>
    <property type="evidence" value="ECO:0007669"/>
    <property type="project" value="UniProtKB-SubCell"/>
</dbReference>
<dbReference type="GO" id="GO:0009536">
    <property type="term" value="C:plastid"/>
    <property type="evidence" value="ECO:0007669"/>
    <property type="project" value="UniProtKB-ARBA"/>
</dbReference>
<dbReference type="GO" id="GO:0008137">
    <property type="term" value="F:NADH dehydrogenase (ubiquinone) activity"/>
    <property type="evidence" value="ECO:0007669"/>
    <property type="project" value="UniProtKB-EC"/>
</dbReference>
<dbReference type="InterPro" id="IPR001750">
    <property type="entry name" value="ND/Mrp_TM"/>
</dbReference>
<dbReference type="PANTHER" id="PTHR22773">
    <property type="entry name" value="NADH DEHYDROGENASE"/>
    <property type="match status" value="1"/>
</dbReference>
<dbReference type="Pfam" id="PF00361">
    <property type="entry name" value="Proton_antipo_M"/>
    <property type="match status" value="1"/>
</dbReference>
<organism>
    <name type="scientific">Beta vulgaris</name>
    <name type="common">Sugar beet</name>
    <dbReference type="NCBI Taxonomy" id="161934"/>
    <lineage>
        <taxon>Eukaryota</taxon>
        <taxon>Viridiplantae</taxon>
        <taxon>Streptophyta</taxon>
        <taxon>Embryophyta</taxon>
        <taxon>Tracheophyta</taxon>
        <taxon>Spermatophyta</taxon>
        <taxon>Magnoliopsida</taxon>
        <taxon>eudicotyledons</taxon>
        <taxon>Gunneridae</taxon>
        <taxon>Pentapetalae</taxon>
        <taxon>Caryophyllales</taxon>
        <taxon>Chenopodiaceae</taxon>
        <taxon>Betoideae</taxon>
        <taxon>Beta</taxon>
    </lineage>
</organism>
<proteinExistence type="inferred from homology"/>